<evidence type="ECO:0000255" key="1">
    <source>
        <dbReference type="HAMAP-Rule" id="MF_01458"/>
    </source>
</evidence>
<evidence type="ECO:0000269" key="2">
    <source>
    </source>
</evidence>
<sequence>MNFRNLAIWLVIVAVLGGVFVVSQNSRTKSSSEISYSQLLKDVDAGKIKSAEIAGQTVLAKTADNKTLTVNAPMNSEELVNRMVAKNADVKFKSGSISFLAILVQLLPILLVVGVWLFLMRQMQGGAKGAMGFGKSKARLLTENKNRITFEDVAGVDEAKEELQEVVDFLKDPAKFQRLGGKIPKGALLVGPPGTGKTLIARAVAGEAGVPFFTISGSDFVEMFVGVGASRVRDMFEQAKKNAPCIIFIDEIDAVGRHRGAGLGGGNDEREQTLNQLLVEMDGFEANEGIILIAATNRPDVLDPALLRPGRFDRQVVVPNPDVAGREKIIRVHMKNVPLAADVDVKTLARGTPGFSGADLANLVNEAALMAARKNRRMVTMQDFEQAKDKVMMGAERRSMAMNEEEKKLTAYHEGGHAIVALNVPLADPVHKATIVPRGRALGMVMQLPEGDRYSMKYQQMTSRLAIMMGGRVAEEIIFGKENITSGASSDIKAATDLARNMVTRWGYSDILGTVAYGDNQDEVFLGHSVARTQNVSEETARLIDSEVKRLVQYGLDEARRILTDKIDDLHTLGKALLEYETLSGEEIADILKGIPPKREEEEAATAVIAPSLVPLSPGAGASVTA</sequence>
<keyword id="KW-0067">ATP-binding</keyword>
<keyword id="KW-0131">Cell cycle</keyword>
<keyword id="KW-0132">Cell division</keyword>
<keyword id="KW-0997">Cell inner membrane</keyword>
<keyword id="KW-1003">Cell membrane</keyword>
<keyword id="KW-0378">Hydrolase</keyword>
<keyword id="KW-0472">Membrane</keyword>
<keyword id="KW-0479">Metal-binding</keyword>
<keyword id="KW-0482">Metalloprotease</keyword>
<keyword id="KW-0547">Nucleotide-binding</keyword>
<keyword id="KW-0645">Protease</keyword>
<keyword id="KW-1185">Reference proteome</keyword>
<keyword id="KW-0346">Stress response</keyword>
<keyword id="KW-0812">Transmembrane</keyword>
<keyword id="KW-1133">Transmembrane helix</keyword>
<keyword id="KW-0862">Zinc</keyword>
<accession>B8H444</accession>
<organism>
    <name type="scientific">Caulobacter vibrioides (strain NA1000 / CB15N)</name>
    <name type="common">Caulobacter crescentus</name>
    <dbReference type="NCBI Taxonomy" id="565050"/>
    <lineage>
        <taxon>Bacteria</taxon>
        <taxon>Pseudomonadati</taxon>
        <taxon>Pseudomonadota</taxon>
        <taxon>Alphaproteobacteria</taxon>
        <taxon>Caulobacterales</taxon>
        <taxon>Caulobacteraceae</taxon>
        <taxon>Caulobacter</taxon>
    </lineage>
</organism>
<dbReference type="EC" id="3.4.24.-" evidence="1"/>
<dbReference type="EMBL" id="CP001340">
    <property type="protein sequence ID" value="ACL96798.1"/>
    <property type="molecule type" value="Genomic_DNA"/>
</dbReference>
<dbReference type="RefSeq" id="WP_010921059.1">
    <property type="nucleotide sequence ID" value="NC_011916.1"/>
</dbReference>
<dbReference type="RefSeq" id="YP_002518706.1">
    <property type="nucleotide sequence ID" value="NC_011916.1"/>
</dbReference>
<dbReference type="SMR" id="B8H444"/>
<dbReference type="MEROPS" id="M41.001"/>
<dbReference type="GeneID" id="7330358"/>
<dbReference type="KEGG" id="ccs:CCNA_03334"/>
<dbReference type="PATRIC" id="fig|565050.3.peg.3249"/>
<dbReference type="HOGENOM" id="CLU_000688_16_0_5"/>
<dbReference type="OrthoDB" id="9809379at2"/>
<dbReference type="PhylomeDB" id="B8H444"/>
<dbReference type="Proteomes" id="UP000001364">
    <property type="component" value="Chromosome"/>
</dbReference>
<dbReference type="GO" id="GO:0005886">
    <property type="term" value="C:plasma membrane"/>
    <property type="evidence" value="ECO:0007669"/>
    <property type="project" value="UniProtKB-SubCell"/>
</dbReference>
<dbReference type="GO" id="GO:0005524">
    <property type="term" value="F:ATP binding"/>
    <property type="evidence" value="ECO:0007669"/>
    <property type="project" value="UniProtKB-UniRule"/>
</dbReference>
<dbReference type="GO" id="GO:0016887">
    <property type="term" value="F:ATP hydrolysis activity"/>
    <property type="evidence" value="ECO:0007669"/>
    <property type="project" value="UniProtKB-UniRule"/>
</dbReference>
<dbReference type="GO" id="GO:0004176">
    <property type="term" value="F:ATP-dependent peptidase activity"/>
    <property type="evidence" value="ECO:0007669"/>
    <property type="project" value="InterPro"/>
</dbReference>
<dbReference type="GO" id="GO:0004222">
    <property type="term" value="F:metalloendopeptidase activity"/>
    <property type="evidence" value="ECO:0007669"/>
    <property type="project" value="InterPro"/>
</dbReference>
<dbReference type="GO" id="GO:0008270">
    <property type="term" value="F:zinc ion binding"/>
    <property type="evidence" value="ECO:0007669"/>
    <property type="project" value="UniProtKB-UniRule"/>
</dbReference>
<dbReference type="GO" id="GO:0051301">
    <property type="term" value="P:cell division"/>
    <property type="evidence" value="ECO:0007669"/>
    <property type="project" value="UniProtKB-KW"/>
</dbReference>
<dbReference type="GO" id="GO:0030163">
    <property type="term" value="P:protein catabolic process"/>
    <property type="evidence" value="ECO:0007669"/>
    <property type="project" value="UniProtKB-UniRule"/>
</dbReference>
<dbReference type="GO" id="GO:0006508">
    <property type="term" value="P:proteolysis"/>
    <property type="evidence" value="ECO:0007669"/>
    <property type="project" value="UniProtKB-KW"/>
</dbReference>
<dbReference type="CDD" id="cd19501">
    <property type="entry name" value="RecA-like_FtsH"/>
    <property type="match status" value="1"/>
</dbReference>
<dbReference type="FunFam" id="1.10.8.60:FF:000001">
    <property type="entry name" value="ATP-dependent zinc metalloprotease FtsH"/>
    <property type="match status" value="1"/>
</dbReference>
<dbReference type="FunFam" id="1.20.58.760:FF:000001">
    <property type="entry name" value="ATP-dependent zinc metalloprotease FtsH"/>
    <property type="match status" value="1"/>
</dbReference>
<dbReference type="FunFam" id="3.40.50.300:FF:000001">
    <property type="entry name" value="ATP-dependent zinc metalloprotease FtsH"/>
    <property type="match status" value="1"/>
</dbReference>
<dbReference type="Gene3D" id="1.10.8.60">
    <property type="match status" value="1"/>
</dbReference>
<dbReference type="Gene3D" id="3.30.720.210">
    <property type="match status" value="1"/>
</dbReference>
<dbReference type="Gene3D" id="3.40.50.300">
    <property type="entry name" value="P-loop containing nucleotide triphosphate hydrolases"/>
    <property type="match status" value="1"/>
</dbReference>
<dbReference type="Gene3D" id="1.20.58.760">
    <property type="entry name" value="Peptidase M41"/>
    <property type="match status" value="1"/>
</dbReference>
<dbReference type="HAMAP" id="MF_01458">
    <property type="entry name" value="FtsH"/>
    <property type="match status" value="1"/>
</dbReference>
<dbReference type="InterPro" id="IPR003593">
    <property type="entry name" value="AAA+_ATPase"/>
</dbReference>
<dbReference type="InterPro" id="IPR041569">
    <property type="entry name" value="AAA_lid_3"/>
</dbReference>
<dbReference type="InterPro" id="IPR003959">
    <property type="entry name" value="ATPase_AAA_core"/>
</dbReference>
<dbReference type="InterPro" id="IPR003960">
    <property type="entry name" value="ATPase_AAA_CS"/>
</dbReference>
<dbReference type="InterPro" id="IPR005936">
    <property type="entry name" value="FtsH"/>
</dbReference>
<dbReference type="InterPro" id="IPR027417">
    <property type="entry name" value="P-loop_NTPase"/>
</dbReference>
<dbReference type="InterPro" id="IPR011546">
    <property type="entry name" value="Pept_M41_FtsH_extracell"/>
</dbReference>
<dbReference type="InterPro" id="IPR000642">
    <property type="entry name" value="Peptidase_M41"/>
</dbReference>
<dbReference type="InterPro" id="IPR037219">
    <property type="entry name" value="Peptidase_M41-like"/>
</dbReference>
<dbReference type="NCBIfam" id="TIGR01241">
    <property type="entry name" value="FtsH_fam"/>
    <property type="match status" value="1"/>
</dbReference>
<dbReference type="PANTHER" id="PTHR23076:SF97">
    <property type="entry name" value="ATP-DEPENDENT ZINC METALLOPROTEASE YME1L1"/>
    <property type="match status" value="1"/>
</dbReference>
<dbReference type="PANTHER" id="PTHR23076">
    <property type="entry name" value="METALLOPROTEASE M41 FTSH"/>
    <property type="match status" value="1"/>
</dbReference>
<dbReference type="Pfam" id="PF00004">
    <property type="entry name" value="AAA"/>
    <property type="match status" value="1"/>
</dbReference>
<dbReference type="Pfam" id="PF17862">
    <property type="entry name" value="AAA_lid_3"/>
    <property type="match status" value="1"/>
</dbReference>
<dbReference type="Pfam" id="PF06480">
    <property type="entry name" value="FtsH_ext"/>
    <property type="match status" value="1"/>
</dbReference>
<dbReference type="Pfam" id="PF01434">
    <property type="entry name" value="Peptidase_M41"/>
    <property type="match status" value="1"/>
</dbReference>
<dbReference type="SMART" id="SM00382">
    <property type="entry name" value="AAA"/>
    <property type="match status" value="1"/>
</dbReference>
<dbReference type="SUPFAM" id="SSF140990">
    <property type="entry name" value="FtsH protease domain-like"/>
    <property type="match status" value="1"/>
</dbReference>
<dbReference type="SUPFAM" id="SSF52540">
    <property type="entry name" value="P-loop containing nucleoside triphosphate hydrolases"/>
    <property type="match status" value="1"/>
</dbReference>
<dbReference type="PROSITE" id="PS00674">
    <property type="entry name" value="AAA"/>
    <property type="match status" value="1"/>
</dbReference>
<reference key="1">
    <citation type="journal article" date="2010" name="J. Bacteriol.">
        <title>The genetic basis of laboratory adaptation in Caulobacter crescentus.</title>
        <authorList>
            <person name="Marks M.E."/>
            <person name="Castro-Rojas C.M."/>
            <person name="Teiling C."/>
            <person name="Du L."/>
            <person name="Kapatral V."/>
            <person name="Walunas T.L."/>
            <person name="Crosson S."/>
        </authorList>
    </citation>
    <scope>NUCLEOTIDE SEQUENCE [LARGE SCALE GENOMIC DNA]</scope>
    <source>
        <strain>NA1000 / CB15N</strain>
    </source>
</reference>
<reference key="2">
    <citation type="journal article" date="2002" name="Mol. Microbiol.">
        <title>The FtsH protease is involved in development, stress response and heat shock control in Caulobacter crescentus.</title>
        <authorList>
            <person name="Fischer B."/>
            <person name="Rummel G."/>
            <person name="Aldridge P."/>
            <person name="Jenal U."/>
        </authorList>
    </citation>
    <scope>INDUCTION</scope>
    <scope>DISRUPTION PHENOTYPE</scope>
</reference>
<proteinExistence type="evidence at transcript level"/>
<gene>
    <name evidence="1" type="primary">ftsH</name>
    <name type="ordered locus">CCNA_03334</name>
</gene>
<name>FTSH_CAUVN</name>
<feature type="chain" id="PRO_0000400335" description="ATP-dependent zinc metalloprotease FtsH">
    <location>
        <begin position="1"/>
        <end position="626"/>
    </location>
</feature>
<feature type="topological domain" description="Cytoplasmic" evidence="1">
    <location>
        <begin position="1"/>
        <end position="5"/>
    </location>
</feature>
<feature type="transmembrane region" description="Helical" evidence="1">
    <location>
        <begin position="6"/>
        <end position="26"/>
    </location>
</feature>
<feature type="topological domain" description="Periplasmic" evidence="1">
    <location>
        <begin position="27"/>
        <end position="98"/>
    </location>
</feature>
<feature type="transmembrane region" description="Helical" evidence="1">
    <location>
        <begin position="99"/>
        <end position="119"/>
    </location>
</feature>
<feature type="topological domain" description="Cytoplasmic" evidence="1">
    <location>
        <begin position="120"/>
        <end position="626"/>
    </location>
</feature>
<feature type="active site" evidence="1">
    <location>
        <position position="414"/>
    </location>
</feature>
<feature type="binding site" evidence="1">
    <location>
        <begin position="191"/>
        <end position="198"/>
    </location>
    <ligand>
        <name>ATP</name>
        <dbReference type="ChEBI" id="CHEBI:30616"/>
    </ligand>
</feature>
<feature type="binding site" evidence="1">
    <location>
        <position position="413"/>
    </location>
    <ligand>
        <name>Zn(2+)</name>
        <dbReference type="ChEBI" id="CHEBI:29105"/>
        <note>catalytic</note>
    </ligand>
</feature>
<feature type="binding site" evidence="1">
    <location>
        <position position="417"/>
    </location>
    <ligand>
        <name>Zn(2+)</name>
        <dbReference type="ChEBI" id="CHEBI:29105"/>
        <note>catalytic</note>
    </ligand>
</feature>
<feature type="binding site" evidence="1">
    <location>
        <position position="491"/>
    </location>
    <ligand>
        <name>Zn(2+)</name>
        <dbReference type="ChEBI" id="CHEBI:29105"/>
        <note>catalytic</note>
    </ligand>
</feature>
<comment type="function">
    <text evidence="1">Acts as a processive, ATP-dependent zinc metallopeptidase for both cytoplasmic and membrane proteins. Plays a role in the quality control of integral membrane proteins.</text>
</comment>
<comment type="function">
    <text>Absence of FtsH leads to increased sigma-32 levels, which suggests, in analogy to E.coli, that sigma-32 is a substrate for FtsH. May play a role in the general stress response, as overexpression leads to improved resistance to salt stress.</text>
</comment>
<comment type="cofactor">
    <cofactor evidence="1">
        <name>Zn(2+)</name>
        <dbReference type="ChEBI" id="CHEBI:29105"/>
    </cofactor>
    <text evidence="1">Binds 1 zinc ion per subunit.</text>
</comment>
<comment type="subunit">
    <text evidence="1">Homohexamer.</text>
</comment>
<comment type="subcellular location">
    <subcellularLocation>
        <location evidence="1">Cell inner membrane</location>
        <topology evidence="1">Multi-pass membrane protein</topology>
        <orientation evidence="1">Cytoplasmic side</orientation>
    </subcellularLocation>
</comment>
<comment type="induction">
    <text evidence="2">By heat shock at 40 degrees Celsius.</text>
</comment>
<comment type="disruption phenotype">
    <text evidence="2">Cells lacking this gene grow more slowly than wild-type, are filamentous and under high-phosphate defective in stalk biogenesis. They are hypersensitive to a range of antibiotics. Cells do not grow at 37 degrees Celsius, or in 50 mM NaCl. Required for stationary phase survival. Depletion leads to increased levels of sigma-32.</text>
</comment>
<comment type="similarity">
    <text evidence="1">In the central section; belongs to the AAA ATPase family.</text>
</comment>
<comment type="similarity">
    <text evidence="1">In the C-terminal section; belongs to the peptidase M41 family.</text>
</comment>
<protein>
    <recommendedName>
        <fullName evidence="1">ATP-dependent zinc metalloprotease FtsH</fullName>
        <ecNumber evidence="1">3.4.24.-</ecNumber>
    </recommendedName>
</protein>